<sequence length="436" mass="50070">MKNKYISKLLVGAATITLATMISNGEAKASENTQQTSTKHQTTQNNYVTDQQKAFYQVLHLKGITEEQRNQYIKTLREHPERAQEVFSESLKDSKNPDRRVAQQNAFYNVLKNDNLTEQEKNNYIAQIKENPDRSQQVWVESVQSSKAKERQNIENADKAIKDFQDNKAPHDKSAAYEANSKLPKDLRDKNNRFVEKVSIEKAIVRHDERVKSANDAISKLNEKDSIENRRLAQREVNKAPMDVKEHLQKQLDALVAQKDAEKKVAPKVEAPQIQSPQIEKPKVESPKVEVPQIQSPKVEVPQSKLLGYYQSLKDSFNYGYKYLTDTYKSYKEKYDTAKYYYNTYYKYKGAIDQTVLTVLGSGSKSYIQPLKVDDKNGYLAKSYAQVRNYVTESINTGKVLYTFYQNPTLVKTAIKAQETASSIKNTLSNLLSFWK</sequence>
<proteinExistence type="evidence at protein level"/>
<organism>
    <name type="scientific">Staphylococcus aureus (strain NCTC 8325 / PS 47)</name>
    <dbReference type="NCBI Taxonomy" id="93061"/>
    <lineage>
        <taxon>Bacteria</taxon>
        <taxon>Bacillati</taxon>
        <taxon>Bacillota</taxon>
        <taxon>Bacilli</taxon>
        <taxon>Bacillales</taxon>
        <taxon>Staphylococcaceae</taxon>
        <taxon>Staphylococcus</taxon>
    </lineage>
</organism>
<feature type="signal peptide" evidence="2">
    <location>
        <begin position="1"/>
        <end position="29"/>
    </location>
</feature>
<feature type="chain" id="PRO_0000361894" description="Immunoglobulin-binding protein Sbi">
    <location>
        <begin position="30"/>
        <end position="436"/>
    </location>
</feature>
<feature type="repeat" description="B 1">
    <location>
        <begin position="43"/>
        <end position="94"/>
    </location>
</feature>
<feature type="repeat" description="B 2">
    <location>
        <begin position="95"/>
        <end position="148"/>
    </location>
</feature>
<feature type="repeat" description="2-1">
    <location>
        <begin position="267"/>
        <end position="271"/>
    </location>
</feature>
<feature type="repeat" description="2-2">
    <location>
        <begin position="272"/>
        <end position="276"/>
    </location>
</feature>
<feature type="repeat" description="2-3">
    <location>
        <begin position="277"/>
        <end position="281"/>
    </location>
</feature>
<feature type="repeat" description="2-4">
    <location>
        <begin position="282"/>
        <end position="286"/>
    </location>
</feature>
<feature type="repeat" description="2-5">
    <location>
        <begin position="287"/>
        <end position="291"/>
    </location>
</feature>
<feature type="repeat" description="2-6">
    <location>
        <begin position="292"/>
        <end position="296"/>
    </location>
</feature>
<feature type="repeat" description="2-7">
    <location>
        <begin position="297"/>
        <end position="301"/>
    </location>
</feature>
<feature type="repeat" description="2-8">
    <location>
        <begin position="302"/>
        <end position="306"/>
    </location>
</feature>
<feature type="region of interest" description="Sbi-D1">
    <location>
        <begin position="42"/>
        <end position="94"/>
    </location>
</feature>
<feature type="region of interest" description="Sbi-D2">
    <location>
        <begin position="103"/>
        <end position="153"/>
    </location>
</feature>
<feature type="region of interest" description="Sbi-D3">
    <location>
        <begin position="154"/>
        <end position="195"/>
    </location>
</feature>
<feature type="region of interest" description="Sbi-D4">
    <location>
        <begin position="196"/>
        <end position="253"/>
    </location>
</feature>
<feature type="region of interest" description="8 X 5 AA tandem repeat of P-[KQ]-[AISV]-[EKQ]-[AKLSV]">
    <location>
        <begin position="267"/>
        <end position="306"/>
    </location>
</feature>
<feature type="helix" evidence="8">
    <location>
        <begin position="206"/>
        <end position="223"/>
    </location>
</feature>
<feature type="helix" evidence="8">
    <location>
        <begin position="227"/>
        <end position="238"/>
    </location>
</feature>
<feature type="helix" evidence="8">
    <location>
        <begin position="242"/>
        <end position="263"/>
    </location>
</feature>
<accession>Q2FVK5</accession>
<accession>O52187</accession>
<accession>Q9R5V4</accession>
<dbReference type="EMBL" id="AF027155">
    <property type="protein sequence ID" value="AAC38446.1"/>
    <property type="molecule type" value="Genomic_DNA"/>
</dbReference>
<dbReference type="EMBL" id="CP000253">
    <property type="protein sequence ID" value="ABD31714.1"/>
    <property type="molecule type" value="Genomic_DNA"/>
</dbReference>
<dbReference type="RefSeq" id="WP_000792564.1">
    <property type="nucleotide sequence ID" value="NZ_LS483365.1"/>
</dbReference>
<dbReference type="RefSeq" id="YP_501168.1">
    <property type="nucleotide sequence ID" value="NC_007795.1"/>
</dbReference>
<dbReference type="PDB" id="6RMU">
    <property type="method" value="X-ray"/>
    <property type="resolution" value="2.40 A"/>
    <property type="chains" value="C/D=198-266"/>
</dbReference>
<dbReference type="PDBsum" id="6RMU"/>
<dbReference type="SMR" id="Q2FVK5"/>
<dbReference type="STRING" id="93061.SAOUHSC_02706"/>
<dbReference type="PaxDb" id="1280-SAXN108_2673"/>
<dbReference type="GeneID" id="3919725"/>
<dbReference type="KEGG" id="sao:SAOUHSC_02706"/>
<dbReference type="PATRIC" id="fig|93061.5.peg.2450"/>
<dbReference type="eggNOG" id="COG1388">
    <property type="taxonomic scope" value="Bacteria"/>
</dbReference>
<dbReference type="HOGENOM" id="CLU_051343_0_0_9"/>
<dbReference type="OrthoDB" id="2412632at2"/>
<dbReference type="PRO" id="PR:Q2FVK5"/>
<dbReference type="Proteomes" id="UP000008816">
    <property type="component" value="Chromosome"/>
</dbReference>
<dbReference type="GO" id="GO:0005576">
    <property type="term" value="C:extracellular region"/>
    <property type="evidence" value="ECO:0007669"/>
    <property type="project" value="UniProtKB-SubCell"/>
</dbReference>
<dbReference type="GO" id="GO:0005886">
    <property type="term" value="C:plasma membrane"/>
    <property type="evidence" value="ECO:0007669"/>
    <property type="project" value="UniProtKB-SubCell"/>
</dbReference>
<dbReference type="GO" id="GO:0019864">
    <property type="term" value="F:IgG binding"/>
    <property type="evidence" value="ECO:0007669"/>
    <property type="project" value="UniProtKB-KW"/>
</dbReference>
<dbReference type="Gene3D" id="1.20.5.420">
    <property type="entry name" value="Immunoglobulin FC, subunit C"/>
    <property type="match status" value="2"/>
</dbReference>
<dbReference type="Gene3D" id="1.10.10.1270">
    <property type="entry name" value="Sbi, C3 binding domain IV"/>
    <property type="match status" value="1"/>
</dbReference>
<dbReference type="InterPro" id="IPR009063">
    <property type="entry name" value="Ig/albumin-bd_sf"/>
</dbReference>
<dbReference type="InterPro" id="IPR021657">
    <property type="entry name" value="IgG-binding_Sbi_dom_IV"/>
</dbReference>
<dbReference type="InterPro" id="IPR003132">
    <property type="entry name" value="Protein_A_Ig-bd"/>
</dbReference>
<dbReference type="InterPro" id="IPR041909">
    <property type="entry name" value="Sbi_C3_db_domIV"/>
</dbReference>
<dbReference type="Pfam" id="PF02216">
    <property type="entry name" value="B"/>
    <property type="match status" value="2"/>
</dbReference>
<dbReference type="Pfam" id="PF11621">
    <property type="entry name" value="Sbi-IV"/>
    <property type="match status" value="1"/>
</dbReference>
<dbReference type="SUPFAM" id="SSF46997">
    <property type="entry name" value="Bacterial immunoglobulin/albumin-binding domains"/>
    <property type="match status" value="2"/>
</dbReference>
<evidence type="ECO:0000250" key="1">
    <source>
        <dbReference type="UniProtKB" id="A6QJQ7"/>
    </source>
</evidence>
<evidence type="ECO:0000255" key="2"/>
<evidence type="ECO:0000269" key="3">
    <source>
    </source>
</evidence>
<evidence type="ECO:0000269" key="4">
    <source>
    </source>
</evidence>
<evidence type="ECO:0000269" key="5">
    <source>
    </source>
</evidence>
<evidence type="ECO:0000269" key="6">
    <source>
    </source>
</evidence>
<evidence type="ECO:0000305" key="7"/>
<evidence type="ECO:0007829" key="8">
    <source>
        <dbReference type="PDB" id="6RMU"/>
    </source>
</evidence>
<reference key="1">
    <citation type="journal article" date="1998" name="Microbiology">
        <title>A second IgG-binding protein in Staphylococcus aureus.</title>
        <authorList>
            <person name="Zhang L."/>
            <person name="Jacobsson K."/>
            <person name="Vasi J."/>
            <person name="Lindberg M."/>
            <person name="Frykberg L."/>
        </authorList>
    </citation>
    <scope>NUCLEOTIDE SEQUENCE [GENOMIC DNA]</scope>
    <scope>INTERACTION WITH IMMUNOGLOBULIN G</scope>
</reference>
<reference key="2">
    <citation type="book" date="2006" name="Gram positive pathogens, 2nd edition">
        <title>The Staphylococcus aureus NCTC 8325 genome.</title>
        <editorList>
            <person name="Fischetti V."/>
            <person name="Novick R."/>
            <person name="Ferretti J."/>
            <person name="Portnoy D."/>
            <person name="Rood J."/>
        </editorList>
        <authorList>
            <person name="Gillaspy A.F."/>
            <person name="Worrell V."/>
            <person name="Orvis J."/>
            <person name="Roe B.A."/>
            <person name="Dyer D.W."/>
            <person name="Iandolo J.J."/>
        </authorList>
    </citation>
    <scope>NUCLEOTIDE SEQUENCE [LARGE SCALE GENOMIC DNA]</scope>
    <source>
        <strain>NCTC 8325 / PS 47</strain>
    </source>
</reference>
<reference key="3">
    <citation type="journal article" date="1995" name="BioTechniques">
        <title>Cloning of ligand-binding domains of bacterial receptors by phage display.</title>
        <authorList>
            <person name="Jacobsson K."/>
            <person name="Frykberg L."/>
        </authorList>
    </citation>
    <scope>NUCLEOTIDE SEQUENCE [GENOMIC DNA] OF 38-121</scope>
</reference>
<reference key="4">
    <citation type="journal article" date="1999" name="Microbiology">
        <title>Staphylococcus aureus expresses a cell surface protein that binds both IgG and beta-2-glycoprotein I.</title>
        <authorList>
            <person name="Zhang L."/>
            <person name="Jacobsson K."/>
            <person name="Stroem K."/>
            <person name="Lindberg M."/>
            <person name="Frykberg L."/>
        </authorList>
    </citation>
    <scope>INTERACTION WITH APOH</scope>
    <scope>SUBCELLULAR LOCATION</scope>
</reference>
<reference key="5">
    <citation type="journal article" date="2000" name="FEMS Immunol. Med. Microbiol.">
        <title>Expression of staphylococcal protein Sbi is induced by human IgG.</title>
        <authorList>
            <person name="Zhang L."/>
            <person name="Rosander A."/>
            <person name="Jacobsson K."/>
            <person name="Lindberg M."/>
            <person name="Frykberg L."/>
        </authorList>
    </citation>
    <scope>INDUCTION BY IMMUNOGLOBULIN G</scope>
    <scope>DEVELOPMENTAL STAGE</scope>
</reference>
<reference key="6">
    <citation type="journal article" date="2010" name="J. Bacteriol.">
        <title>Synthetic effects of secG and secY2 mutations on exoproteome biogenesis in Staphylococcus aureus.</title>
        <authorList>
            <person name="Sibbald M.J."/>
            <person name="Winter T."/>
            <person name="van der Kooi-Pol M.M."/>
            <person name="Buist G."/>
            <person name="Tsompanidou E."/>
            <person name="Bosma T."/>
            <person name="Schafer T."/>
            <person name="Ohlsen K."/>
            <person name="Hecker M."/>
            <person name="Antelmann H."/>
            <person name="Engelmann S."/>
            <person name="van Dijl J.M."/>
        </authorList>
    </citation>
    <scope>SUBCELLULAR LOCATION</scope>
    <scope>EXPORT MECHANISM</scope>
    <source>
        <strain>RN4220</strain>
        <strain>SH1000</strain>
    </source>
</reference>
<protein>
    <recommendedName>
        <fullName>Immunoglobulin-binding protein Sbi</fullName>
    </recommendedName>
</protein>
<gene>
    <name type="primary">sbi</name>
    <name type="ordered locus">SAOUHSC_02706</name>
</gene>
<name>SBI_STAA8</name>
<keyword id="KW-0002">3D-structure</keyword>
<keyword id="KW-1003">Cell membrane</keyword>
<keyword id="KW-0390">IgG-binding protein</keyword>
<keyword id="KW-0472">Membrane</keyword>
<keyword id="KW-1185">Reference proteome</keyword>
<keyword id="KW-0677">Repeat</keyword>
<keyword id="KW-0964">Secreted</keyword>
<keyword id="KW-0732">Signal</keyword>
<keyword id="KW-0843">Virulence</keyword>
<comment type="function">
    <text evidence="1">Plays a role in the inhibition of both the innate and adaptive immune responses. Possesses two N-terminal domains that bind the Fc region of IgG and two domains that form a tripartite complex with complement factors C3b and CFH. By recruiting CFH and C3b, the secreted form acts as a potent complement inhibitor of the alternative pathway-mediated lysis.</text>
</comment>
<comment type="subunit">
    <text evidence="1 3 6">Interacts (via sbi-I and sbi-II domains) with the Fc region of mammalian immunoglobulin G (IgG) proteins (By similarity) (PubMed:9579072). Interacts (via sbi-III and sbi-IV domains) with host complement C3 (By similarity). Interacts (via sbi-III and sbi-IV domains) with host CFH (By similarity). Interacts (via sbi-IV domain) with beta-2-glycoprotein 1/APOH (PubMed:10206697).</text>
</comment>
<comment type="subcellular location">
    <subcellularLocation>
        <location evidence="3 5">Secreted</location>
    </subcellularLocation>
    <subcellularLocation>
        <location evidence="1">Cell membrane</location>
    </subcellularLocation>
    <text evidence="1">Occurs both extracellularly and associated with the cytoplasmic membrane where only the domains I and II are exposed to the extracellular media (By similarity). Membrane association occurs via binding to lipoteichoic acid (By similarity).</text>
</comment>
<comment type="developmental stage">
    <text evidence="4">Expression peaks approximately 2 hours after the addition of human IgG.</text>
</comment>
<comment type="induction">
    <text evidence="4">Strongly expressed in the presence of human IgG.</text>
</comment>
<comment type="domain">
    <text evidence="1">Sbi-I and sbi-II domains provide protection only when anchored to the cell surface, whereas only the secreted sbi-III and sbi-IV domains are biologically active.</text>
</comment>
<comment type="similarity">
    <text evidence="7">Belongs to the immunoglobulin-binding protein Sbi family.</text>
</comment>